<feature type="chain" id="PRO_0000102238" description="Endonuclease III homolog 2">
    <location>
        <begin position="1"/>
        <end position="380"/>
    </location>
</feature>
<feature type="domain" description="HhH" evidence="2">
    <location>
        <begin position="228"/>
        <end position="252"/>
    </location>
</feature>
<feature type="region of interest" description="Interaction with MLH1" evidence="6">
    <location>
        <begin position="15"/>
        <end position="40"/>
    </location>
</feature>
<feature type="short sequence motif" description="Nuclear localization signal" evidence="1">
    <location>
        <begin position="8"/>
        <end position="12"/>
    </location>
</feature>
<feature type="short sequence motif" description="Nuclear localization signal" evidence="1">
    <location>
        <begin position="376"/>
        <end position="380"/>
    </location>
</feature>
<feature type="active site" description="Nucleophile; for N-glycosylase activity" evidence="2">
    <location>
        <position position="248"/>
    </location>
</feature>
<feature type="binding site" evidence="2">
    <location>
        <position position="319"/>
    </location>
    <ligand>
        <name>[4Fe-4S] cluster</name>
        <dbReference type="ChEBI" id="CHEBI:49883"/>
    </ligand>
</feature>
<feature type="binding site" evidence="2">
    <location>
        <position position="326"/>
    </location>
    <ligand>
        <name>[4Fe-4S] cluster</name>
        <dbReference type="ChEBI" id="CHEBI:49883"/>
    </ligand>
</feature>
<feature type="binding site" evidence="2">
    <location>
        <position position="329"/>
    </location>
    <ligand>
        <name>[4Fe-4S] cluster</name>
        <dbReference type="ChEBI" id="CHEBI:49883"/>
    </ligand>
</feature>
<feature type="binding site" evidence="2">
    <location>
        <position position="335"/>
    </location>
    <ligand>
        <name>[4Fe-4S] cluster</name>
        <dbReference type="ChEBI" id="CHEBI:49883"/>
    </ligand>
</feature>
<feature type="site" description="Important for catalytic activity" evidence="2">
    <location>
        <position position="267"/>
    </location>
</feature>
<feature type="cross-link" description="Glycyl lysine isopeptide (Lys-Gly) (interchain with G-Cter in SUMO)" evidence="1">
    <location>
        <position position="194"/>
    </location>
</feature>
<feature type="mutagenesis site" description="Abolishes interaction with MLH1." evidence="6">
    <original>S</original>
    <variation>A</variation>
    <location>
        <position position="24"/>
    </location>
</feature>
<feature type="mutagenesis site" description="Abolishes interaction with MLH1." evidence="6">
    <original>Y</original>
    <variation>A</variation>
    <location>
        <position position="26"/>
    </location>
</feature>
<feature type="mutagenesis site" description="Abolishes interaction with MLH1." evidence="6">
    <original>F</original>
    <variation>A</variation>
    <location>
        <position position="27"/>
    </location>
</feature>
<gene>
    <name type="primary">NTG2</name>
    <name type="synonym">SCR2</name>
    <name type="ordered locus">YOL043C</name>
</gene>
<keyword id="KW-0002">3D-structure</keyword>
<keyword id="KW-0004">4Fe-4S</keyword>
<keyword id="KW-0227">DNA damage</keyword>
<keyword id="KW-0234">DNA repair</keyword>
<keyword id="KW-0326">Glycosidase</keyword>
<keyword id="KW-0378">Hydrolase</keyword>
<keyword id="KW-0408">Iron</keyword>
<keyword id="KW-0411">Iron-sulfur</keyword>
<keyword id="KW-1017">Isopeptide bond</keyword>
<keyword id="KW-0456">Lyase</keyword>
<keyword id="KW-0479">Metal-binding</keyword>
<keyword id="KW-0539">Nucleus</keyword>
<keyword id="KW-1185">Reference proteome</keyword>
<keyword id="KW-0832">Ubl conjugation</keyword>
<sequence>MREESRSRKRKHIPVDIEEVEVRSKYFKKNERTVELVKENKINKDLQNYGGVNIDWIKALKPIEYFEWIESRTCDDPRTWGRPITKEEMINDSGAKVPESFLPIYNRVRLMRSKVKTPVDAMGCSMIPVLVSNKCGIPSEKVDPKNFRLQFLIGTMLSAQTRDERMAQAALNITEYCLNTLKIAEGITLDGLLKIDEPVLANLIRCVSFYTRKANFIKRTAQLLVDNFDSDIPYDIEGILSLPGVGPKMGYLTLQKGWGLIAGICVDVHVHRLCKMWNWVDPIKCKTAEHTRKELQVWLPHSLWYEINTVLVGFGQLICMARGKRCDLCLANDVCNARNEKLIESSKFHQLEDKEDIEKVYSHWLDTVTNGITTERHKKK</sequence>
<accession>Q08214</accession>
<accession>D6W223</accession>
<evidence type="ECO:0000255" key="1"/>
<evidence type="ECO:0000255" key="2">
    <source>
        <dbReference type="HAMAP-Rule" id="MF_03183"/>
    </source>
</evidence>
<evidence type="ECO:0000269" key="3">
    <source>
    </source>
</evidence>
<evidence type="ECO:0000269" key="4">
    <source>
    </source>
</evidence>
<evidence type="ECO:0000269" key="5">
    <source>
    </source>
</evidence>
<evidence type="ECO:0000269" key="6">
    <source>
    </source>
</evidence>
<evidence type="ECO:0000269" key="7">
    <source>
    </source>
</evidence>
<evidence type="ECO:0000269" key="8">
    <source>
    </source>
</evidence>
<evidence type="ECO:0000269" key="9">
    <source>
    </source>
</evidence>
<evidence type="ECO:0000269" key="10">
    <source>
    </source>
</evidence>
<evidence type="ECO:0000269" key="11">
    <source>
    </source>
</evidence>
<evidence type="ECO:0000269" key="12">
    <source>
    </source>
</evidence>
<evidence type="ECO:0000269" key="13">
    <source>
    </source>
</evidence>
<evidence type="ECO:0000269" key="14">
    <source>
    </source>
</evidence>
<evidence type="ECO:0000269" key="15">
    <source>
    </source>
</evidence>
<organism>
    <name type="scientific">Saccharomyces cerevisiae (strain ATCC 204508 / S288c)</name>
    <name type="common">Baker's yeast</name>
    <dbReference type="NCBI Taxonomy" id="559292"/>
    <lineage>
        <taxon>Eukaryota</taxon>
        <taxon>Fungi</taxon>
        <taxon>Dikarya</taxon>
        <taxon>Ascomycota</taxon>
        <taxon>Saccharomycotina</taxon>
        <taxon>Saccharomycetes</taxon>
        <taxon>Saccharomycetales</taxon>
        <taxon>Saccharomycetaceae</taxon>
        <taxon>Saccharomyces</taxon>
    </lineage>
</organism>
<name>NTH2_YEAST</name>
<comment type="function">
    <text evidence="2 3 4 5 7 9 10 11 13 14 15">Bifunctional DNA N-glycosylase with associated apurinic/apyrimidinic (AP) lyase function that catalyzes the first step in base excision repair (BER), the primary repair pathway for the repair of oxidative DNA damage. The DNA N-glycosylase activity releases the damaged DNA base from DNA by cleaving the N-glycosidic bond, leaving an AP site. The AP-lyase activity cleaves the phosphodiester bond 3' to the AP site by a beta-elimination. Primarily recognizes and repairs oxidative base damage of pyrimidines, but also purine-derived lesions, alkylation damage as well as abasic sites. Can also repair the oxidation products of 8-oxoguanine.</text>
</comment>
<comment type="catalytic activity">
    <reaction evidence="2 7">
        <text>2'-deoxyribonucleotide-(2'-deoxyribose 5'-phosphate)-2'-deoxyribonucleotide-DNA = a 3'-end 2'-deoxyribonucleotide-(2,3-dehydro-2,3-deoxyribose 5'-phosphate)-DNA + a 5'-end 5'-phospho-2'-deoxyribonucleoside-DNA + H(+)</text>
        <dbReference type="Rhea" id="RHEA:66592"/>
        <dbReference type="Rhea" id="RHEA-COMP:13180"/>
        <dbReference type="Rhea" id="RHEA-COMP:16897"/>
        <dbReference type="Rhea" id="RHEA-COMP:17067"/>
        <dbReference type="ChEBI" id="CHEBI:15378"/>
        <dbReference type="ChEBI" id="CHEBI:136412"/>
        <dbReference type="ChEBI" id="CHEBI:157695"/>
        <dbReference type="ChEBI" id="CHEBI:167181"/>
        <dbReference type="EC" id="4.2.99.18"/>
    </reaction>
</comment>
<comment type="cofactor">
    <cofactor evidence="2">
        <name>[4Fe-4S] cluster</name>
        <dbReference type="ChEBI" id="CHEBI:49883"/>
    </cofactor>
    <text evidence="2">Binds 1 [4Fe-4S] cluster. The cluster does not appear to play a role in catalysis, but is probably involved in the proper positioning of the enzyme along the DNA strand.</text>
</comment>
<comment type="biophysicochemical properties">
    <kinetics>
        <KM evidence="7 14 15">160 nM for dihydrouracil containing duplex oligonucleotides (N-glycosylase activity)</KM>
        <KM evidence="7 14 15">178 nM for 5-hydroxy-6-hydrothymine containing duplex oligonucleotides (N-glycosylase activity)</KM>
        <KM evidence="7 14 15">557 nM for 5-hydroxy-6-hydrouracil containing duplex oligonucleotides (N-glycosylase activity)</KM>
        <KM evidence="7 14 15">431 nM for 5-hydroxyuracil containing duplex oligonucleotides (N-glycosylase activity)</KM>
        <KM evidence="7 14 15">419 nM for 5-hydroxycytosine containing duplex oligonucleotides (N-glycosylase activity)</KM>
        <KM evidence="7 14 15">1000 nM for thymine glycol containing duplex oligonucleotides (N-glycosylase activity)</KM>
        <KM evidence="7 14 15">824 nM for 2,6-diamino-4-hydroxy-5-formamidopyrimidine (FapyAde) containing duplex oligonucleotides (N-glycosylase activity)</KM>
        <KM evidence="7 14 15">2529 nM for 4,6-diamino-5-formamidopyrimidine (FapyGua) containing duplex oligonucleotides (N-glycosylase activity)</KM>
        <Vmax evidence="7 14 15">0.2 nmol/min/ng enzyme for dihydrouracil containing duplex oligonucleotides (N-glycosylase activity)</Vmax>
    </kinetics>
</comment>
<comment type="subunit">
    <text evidence="6">Interacts with MLH1.</text>
</comment>
<comment type="interaction">
    <interactant intactId="EBI-12303">
        <id>Q08214</id>
    </interactant>
    <interactant intactId="EBI-11003">
        <id>P38920</id>
        <label>MLH1</label>
    </interactant>
    <organismsDiffer>false</organismsDiffer>
    <experiments>3</experiments>
</comment>
<comment type="subcellular location">
    <subcellularLocation>
        <location evidence="2 3 4 12">Nucleus</location>
    </subcellularLocation>
    <text>Exclusively nuclear and not responsive to changes in either nuclear or mitochondrial oxidative stress.</text>
</comment>
<comment type="induction">
    <text evidence="3 14">Constitutively expressed.</text>
</comment>
<comment type="PTM">
    <text>Monosumoylated.</text>
</comment>
<comment type="disruption phenotype">
    <text evidence="3">Greatly increases spontaneous and hydrogen peroxide-induced mutation frequency.</text>
</comment>
<comment type="miscellaneous">
    <text evidence="8">Present with 125 molecules/cell in log phase SD medium.</text>
</comment>
<comment type="similarity">
    <text evidence="2">Belongs to the Nth/MutY family.</text>
</comment>
<protein>
    <recommendedName>
        <fullName evidence="2">Endonuclease III homolog 2</fullName>
        <ecNumber evidence="2">3.2.2.-</ecNumber>
        <ecNumber evidence="2 7">4.2.99.18</ecNumber>
    </recommendedName>
    <alternativeName>
        <fullName evidence="2">Bifunctional DNA N-glycosylase/DNA-(apurinic or apyrimidinic site) lyase 2</fullName>
        <shortName evidence="2">DNA glycosylase/AP lyase 2</shortName>
    </alternativeName>
    <alternativeName>
        <fullName>Endonuclease III-like glycosylase 2</fullName>
    </alternativeName>
    <alternativeName>
        <fullName>Redoxyendonuclease 2</fullName>
    </alternativeName>
</protein>
<dbReference type="EC" id="3.2.2.-" evidence="2"/>
<dbReference type="EC" id="4.2.99.18" evidence="2 7"/>
<dbReference type="EMBL" id="Z74785">
    <property type="protein sequence ID" value="CAA99045.1"/>
    <property type="molecule type" value="Genomic_DNA"/>
</dbReference>
<dbReference type="EMBL" id="BK006948">
    <property type="protein sequence ID" value="DAA10739.1"/>
    <property type="molecule type" value="Genomic_DNA"/>
</dbReference>
<dbReference type="PIR" id="S66728">
    <property type="entry name" value="S66728"/>
</dbReference>
<dbReference type="RefSeq" id="NP_014599.1">
    <property type="nucleotide sequence ID" value="NM_001183297.1"/>
</dbReference>
<dbReference type="PDB" id="4FMN">
    <property type="method" value="X-ray"/>
    <property type="resolution" value="2.69 A"/>
    <property type="chains" value="C=22-29"/>
</dbReference>
<dbReference type="PDBsum" id="4FMN"/>
<dbReference type="SMR" id="Q08214"/>
<dbReference type="BioGRID" id="34359">
    <property type="interactions" value="159"/>
</dbReference>
<dbReference type="DIP" id="DIP-2956N"/>
<dbReference type="FunCoup" id="Q08214">
    <property type="interactions" value="443"/>
</dbReference>
<dbReference type="IntAct" id="Q08214">
    <property type="interactions" value="2"/>
</dbReference>
<dbReference type="MINT" id="Q08214"/>
<dbReference type="STRING" id="4932.YOL043C"/>
<dbReference type="PaxDb" id="4932-YOL043C"/>
<dbReference type="PeptideAtlas" id="Q08214"/>
<dbReference type="TopDownProteomics" id="Q08214"/>
<dbReference type="EnsemblFungi" id="YOL043C_mRNA">
    <property type="protein sequence ID" value="YOL043C"/>
    <property type="gene ID" value="YOL043C"/>
</dbReference>
<dbReference type="GeneID" id="854114"/>
<dbReference type="KEGG" id="sce:YOL043C"/>
<dbReference type="AGR" id="SGD:S000005403"/>
<dbReference type="SGD" id="S000005403">
    <property type="gene designation" value="NTG2"/>
</dbReference>
<dbReference type="VEuPathDB" id="FungiDB:YOL043C"/>
<dbReference type="eggNOG" id="KOG1921">
    <property type="taxonomic scope" value="Eukaryota"/>
</dbReference>
<dbReference type="GeneTree" id="ENSGT00510000047513"/>
<dbReference type="HOGENOM" id="CLU_012862_4_3_1"/>
<dbReference type="InParanoid" id="Q08214"/>
<dbReference type="OMA" id="RGKRCDL"/>
<dbReference type="OrthoDB" id="2099276at2759"/>
<dbReference type="BioCyc" id="YEAST:G3O-33457-MONOMER"/>
<dbReference type="Reactome" id="R-SCE-110329">
    <property type="pathway name" value="Cleavage of the damaged pyrimidine"/>
</dbReference>
<dbReference type="BioGRID-ORCS" id="854114">
    <property type="hits" value="0 hits in 10 CRISPR screens"/>
</dbReference>
<dbReference type="EvolutionaryTrace" id="Q08214"/>
<dbReference type="PRO" id="PR:Q08214"/>
<dbReference type="Proteomes" id="UP000002311">
    <property type="component" value="Chromosome XV"/>
</dbReference>
<dbReference type="RNAct" id="Q08214">
    <property type="molecule type" value="protein"/>
</dbReference>
<dbReference type="GO" id="GO:0005739">
    <property type="term" value="C:mitochondrion"/>
    <property type="evidence" value="ECO:0007669"/>
    <property type="project" value="UniProtKB-UniRule"/>
</dbReference>
<dbReference type="GO" id="GO:0005634">
    <property type="term" value="C:nucleus"/>
    <property type="evidence" value="ECO:0000314"/>
    <property type="project" value="SGD"/>
</dbReference>
<dbReference type="GO" id="GO:0051539">
    <property type="term" value="F:4 iron, 4 sulfur cluster binding"/>
    <property type="evidence" value="ECO:0007669"/>
    <property type="project" value="UniProtKB-KW"/>
</dbReference>
<dbReference type="GO" id="GO:0140078">
    <property type="term" value="F:class I DNA-(apurinic or apyrimidinic site) endonuclease activity"/>
    <property type="evidence" value="ECO:0007669"/>
    <property type="project" value="UniProtKB-EC"/>
</dbReference>
<dbReference type="GO" id="GO:0003677">
    <property type="term" value="F:DNA binding"/>
    <property type="evidence" value="ECO:0007669"/>
    <property type="project" value="UniProtKB-UniRule"/>
</dbReference>
<dbReference type="GO" id="GO:0003906">
    <property type="term" value="F:DNA-(apurinic or apyrimidinic site) endonuclease activity"/>
    <property type="evidence" value="ECO:0000314"/>
    <property type="project" value="SGD"/>
</dbReference>
<dbReference type="GO" id="GO:0046872">
    <property type="term" value="F:metal ion binding"/>
    <property type="evidence" value="ECO:0007669"/>
    <property type="project" value="UniProtKB-KW"/>
</dbReference>
<dbReference type="GO" id="GO:0000703">
    <property type="term" value="F:oxidized pyrimidine nucleobase lesion DNA N-glycosylase activity"/>
    <property type="evidence" value="ECO:0000314"/>
    <property type="project" value="SGD"/>
</dbReference>
<dbReference type="GO" id="GO:0006284">
    <property type="term" value="P:base-excision repair"/>
    <property type="evidence" value="ECO:0000314"/>
    <property type="project" value="SGD"/>
</dbReference>
<dbReference type="GO" id="GO:0006285">
    <property type="term" value="P:base-excision repair, AP site formation"/>
    <property type="evidence" value="ECO:0000314"/>
    <property type="project" value="SGD"/>
</dbReference>
<dbReference type="GO" id="GO:0006289">
    <property type="term" value="P:nucleotide-excision repair"/>
    <property type="evidence" value="ECO:0000318"/>
    <property type="project" value="GO_Central"/>
</dbReference>
<dbReference type="CDD" id="cd00056">
    <property type="entry name" value="ENDO3c"/>
    <property type="match status" value="1"/>
</dbReference>
<dbReference type="FunFam" id="1.10.340.30:FF:000001">
    <property type="entry name" value="Endonuclease III"/>
    <property type="match status" value="1"/>
</dbReference>
<dbReference type="FunFam" id="1.10.1670.10:FF:000021">
    <property type="entry name" value="Endonuclease III homolog"/>
    <property type="match status" value="1"/>
</dbReference>
<dbReference type="Gene3D" id="1.10.1670.10">
    <property type="entry name" value="Helix-hairpin-Helix base-excision DNA repair enzymes (C-terminal)"/>
    <property type="match status" value="1"/>
</dbReference>
<dbReference type="Gene3D" id="1.10.340.30">
    <property type="entry name" value="Hypothetical protein, domain 2"/>
    <property type="match status" value="1"/>
</dbReference>
<dbReference type="HAMAP" id="MF_03183">
    <property type="entry name" value="Endonuclease_III_Nth"/>
    <property type="match status" value="1"/>
</dbReference>
<dbReference type="InterPro" id="IPR011257">
    <property type="entry name" value="DNA_glycosylase"/>
</dbReference>
<dbReference type="InterPro" id="IPR004036">
    <property type="entry name" value="Endonuclease-III-like_CS2"/>
</dbReference>
<dbReference type="InterPro" id="IPR003651">
    <property type="entry name" value="Endonuclease3_FeS-loop_motif"/>
</dbReference>
<dbReference type="InterPro" id="IPR003265">
    <property type="entry name" value="HhH-GPD_domain"/>
</dbReference>
<dbReference type="InterPro" id="IPR023170">
    <property type="entry name" value="HhH_base_excis_C"/>
</dbReference>
<dbReference type="InterPro" id="IPR030841">
    <property type="entry name" value="NTH1"/>
</dbReference>
<dbReference type="PANTHER" id="PTHR43286">
    <property type="entry name" value="ENDONUCLEASE III-LIKE PROTEIN 1"/>
    <property type="match status" value="1"/>
</dbReference>
<dbReference type="PANTHER" id="PTHR43286:SF1">
    <property type="entry name" value="ENDONUCLEASE III-LIKE PROTEIN 1"/>
    <property type="match status" value="1"/>
</dbReference>
<dbReference type="Pfam" id="PF00730">
    <property type="entry name" value="HhH-GPD"/>
    <property type="match status" value="1"/>
</dbReference>
<dbReference type="SMART" id="SM00478">
    <property type="entry name" value="ENDO3c"/>
    <property type="match status" value="1"/>
</dbReference>
<dbReference type="SMART" id="SM00525">
    <property type="entry name" value="FES"/>
    <property type="match status" value="1"/>
</dbReference>
<dbReference type="SUPFAM" id="SSF48150">
    <property type="entry name" value="DNA-glycosylase"/>
    <property type="match status" value="1"/>
</dbReference>
<dbReference type="PROSITE" id="PS01155">
    <property type="entry name" value="ENDONUCLEASE_III_2"/>
    <property type="match status" value="1"/>
</dbReference>
<reference key="1">
    <citation type="journal article" date="1997" name="Nature">
        <title>The nucleotide sequence of Saccharomyces cerevisiae chromosome XV.</title>
        <authorList>
            <person name="Dujon B."/>
            <person name="Albermann K."/>
            <person name="Aldea M."/>
            <person name="Alexandraki D."/>
            <person name="Ansorge W."/>
            <person name="Arino J."/>
            <person name="Benes V."/>
            <person name="Bohn C."/>
            <person name="Bolotin-Fukuhara M."/>
            <person name="Bordonne R."/>
            <person name="Boyer J."/>
            <person name="Camasses A."/>
            <person name="Casamayor A."/>
            <person name="Casas C."/>
            <person name="Cheret G."/>
            <person name="Cziepluch C."/>
            <person name="Daignan-Fornier B."/>
            <person name="Dang V.-D."/>
            <person name="de Haan M."/>
            <person name="Delius H."/>
            <person name="Durand P."/>
            <person name="Fairhead C."/>
            <person name="Feldmann H."/>
            <person name="Gaillon L."/>
            <person name="Galisson F."/>
            <person name="Gamo F.-J."/>
            <person name="Gancedo C."/>
            <person name="Goffeau A."/>
            <person name="Goulding S.E."/>
            <person name="Grivell L.A."/>
            <person name="Habbig B."/>
            <person name="Hand N.J."/>
            <person name="Hani J."/>
            <person name="Hattenhorst U."/>
            <person name="Hebling U."/>
            <person name="Hernando Y."/>
            <person name="Herrero E."/>
            <person name="Heumann K."/>
            <person name="Hiesel R."/>
            <person name="Hilger F."/>
            <person name="Hofmann B."/>
            <person name="Hollenberg C.P."/>
            <person name="Hughes B."/>
            <person name="Jauniaux J.-C."/>
            <person name="Kalogeropoulos A."/>
            <person name="Katsoulou C."/>
            <person name="Kordes E."/>
            <person name="Lafuente M.J."/>
            <person name="Landt O."/>
            <person name="Louis E.J."/>
            <person name="Maarse A.C."/>
            <person name="Madania A."/>
            <person name="Mannhaupt G."/>
            <person name="Marck C."/>
            <person name="Martin R.P."/>
            <person name="Mewes H.-W."/>
            <person name="Michaux G."/>
            <person name="Paces V."/>
            <person name="Parle-McDermott A.G."/>
            <person name="Pearson B.M."/>
            <person name="Perrin A."/>
            <person name="Pettersson B."/>
            <person name="Poch O."/>
            <person name="Pohl T.M."/>
            <person name="Poirey R."/>
            <person name="Portetelle D."/>
            <person name="Pujol A."/>
            <person name="Purnelle B."/>
            <person name="Ramezani Rad M."/>
            <person name="Rechmann S."/>
            <person name="Schwager C."/>
            <person name="Schweizer M."/>
            <person name="Sor F."/>
            <person name="Sterky F."/>
            <person name="Tarassov I.A."/>
            <person name="Teodoru C."/>
            <person name="Tettelin H."/>
            <person name="Thierry A."/>
            <person name="Tobiasch E."/>
            <person name="Tzermia M."/>
            <person name="Uhlen M."/>
            <person name="Unseld M."/>
            <person name="Valens M."/>
            <person name="Vandenbol M."/>
            <person name="Vetter I."/>
            <person name="Vlcek C."/>
            <person name="Voet M."/>
            <person name="Volckaert G."/>
            <person name="Voss H."/>
            <person name="Wambutt R."/>
            <person name="Wedler H."/>
            <person name="Wiemann S."/>
            <person name="Winsor B."/>
            <person name="Wolfe K.H."/>
            <person name="Zollner A."/>
            <person name="Zumstein E."/>
            <person name="Kleine K."/>
        </authorList>
    </citation>
    <scope>NUCLEOTIDE SEQUENCE [LARGE SCALE GENOMIC DNA]</scope>
    <source>
        <strain>ATCC 204508 / S288c</strain>
    </source>
</reference>
<reference key="2">
    <citation type="journal article" date="2014" name="G3 (Bethesda)">
        <title>The reference genome sequence of Saccharomyces cerevisiae: Then and now.</title>
        <authorList>
            <person name="Engel S.R."/>
            <person name="Dietrich F.S."/>
            <person name="Fisk D.G."/>
            <person name="Binkley G."/>
            <person name="Balakrishnan R."/>
            <person name="Costanzo M.C."/>
            <person name="Dwight S.S."/>
            <person name="Hitz B.C."/>
            <person name="Karra K."/>
            <person name="Nash R.S."/>
            <person name="Weng S."/>
            <person name="Wong E.D."/>
            <person name="Lloyd P."/>
            <person name="Skrzypek M.S."/>
            <person name="Miyasato S.R."/>
            <person name="Simison M."/>
            <person name="Cherry J.M."/>
        </authorList>
    </citation>
    <scope>GENOME REANNOTATION</scope>
    <source>
        <strain>ATCC 204508 / S288c</strain>
    </source>
</reference>
<reference key="3">
    <citation type="journal article" date="1997" name="Biochemistry">
        <title>Purification, characterization, gene cloning, and expression of Saccharomyces cerevisiae redoxyendonuclease, a homolog of Escherichia coli endonuclease III.</title>
        <authorList>
            <person name="Augeri L."/>
            <person name="Lee Y.M."/>
            <person name="Barton A.B."/>
            <person name="Doetsch P.W."/>
        </authorList>
    </citation>
    <scope>FUNCTION</scope>
</reference>
<reference key="4">
    <citation type="journal article" date="1998" name="Biochemistry">
        <title>Saccharomyces cerevisiae possesses two functional homologues of Escherichia coli endonuclease III.</title>
        <authorList>
            <person name="You H.J."/>
            <person name="Swanson R.L."/>
            <person name="Doetsch P.W."/>
        </authorList>
    </citation>
    <scope>FUNCTION</scope>
    <scope>SUBSTRATES</scope>
    <scope>INDUCTION</scope>
    <scope>BIOPHYSICOCHEMICAL PROPERTIES</scope>
</reference>
<reference key="5">
    <citation type="journal article" date="1998" name="Nucleic Acids Res.">
        <title>Substrate specificities of the ntg1 and ntg2 proteins of Saccharomyces cerevisiae for oxidized DNA bases are not identical.</title>
        <authorList>
            <person name="Senturker S."/>
            <person name="Auffret van der Kemp P."/>
            <person name="You H.J."/>
            <person name="Doetsch P.W."/>
            <person name="Dizdaroglu M."/>
            <person name="Boiteux S."/>
        </authorList>
    </citation>
    <scope>FUNCTION</scope>
    <scope>SUBSTRATES</scope>
    <scope>BIOPHYSICOCHEMICAL PROPERTIES</scope>
</reference>
<reference key="6">
    <citation type="journal article" date="1999" name="Biochemistry">
        <title>Saccharomyces cerevisiae Ntg1p and Ntg2p: broad specificity N-glycosylases for the repair of oxidative DNA damage in the nucleus and mitochondria.</title>
        <authorList>
            <person name="You H.J."/>
            <person name="Swanson R.L."/>
            <person name="Harrington C."/>
            <person name="Corbett A.H."/>
            <person name="Jinks-Robertson S."/>
            <person name="Sentuerker S."/>
            <person name="Wallace S.S."/>
            <person name="Boiteux S."/>
            <person name="Dizdaroglu M."/>
            <person name="Doetsch P.W."/>
        </authorList>
    </citation>
    <scope>FUNCTION</scope>
    <scope>SUBCELLULAR LOCATION</scope>
</reference>
<reference key="7">
    <citation type="journal article" date="1999" name="Mol. Cell. Biol.">
        <title>The Saccharomyces cerevisiae homologues of endonuclease III from Escherichia coli, Ntg1 and Ntg2, are both required for efficient repair of spontaneous and induced oxidative DNA damage in yeast.</title>
        <authorList>
            <person name="Alseth I."/>
            <person name="Eide L."/>
            <person name="Pirovano M."/>
            <person name="Rognes T."/>
            <person name="Seeberg E."/>
            <person name="Bjoras M."/>
        </authorList>
    </citation>
    <scope>FUNCTION IN OXIDATIVE DNA DAMAGE REPAIR</scope>
    <scope>SUBCELLULAR LOCATION</scope>
    <scope>DISRUPTION PHENOTYPE</scope>
    <scope>INDUCTION</scope>
</reference>
<reference key="8">
    <citation type="journal article" date="2001" name="Biochem. Biophys. Res. Commun.">
        <title>Ntg2 of Saccharomyces cerevisiae repairs the oxidation products of 8-hydroxyguanine.</title>
        <authorList>
            <person name="Kim J.E."/>
            <person name="You H.J."/>
            <person name="Choi J.Y."/>
            <person name="Doetsch P.W."/>
            <person name="Kim J.S."/>
            <person name="Chung M.H."/>
        </authorList>
    </citation>
    <scope>FUNCTION</scope>
</reference>
<reference key="9">
    <citation type="journal article" date="2002" name="J. Biol. Chem.">
        <title>Ntg2p, a Saccharomyces cerevisiae DNA N-glycosylase/apurinic or apyrimidinic lyase involved in base excision repair of oxidative DNA damage, interacts with the DNA mismatch repair protein Mlh1p. Identification of a Mlh1p binding motif.</title>
        <authorList>
            <person name="Gellon L."/>
            <person name="Werner M."/>
            <person name="Boiteux S."/>
        </authorList>
    </citation>
    <scope>INTERACTION WITH MLH1</scope>
    <scope>MUTAGENESIS OF SER-24; TYR-26 AND PHE-27</scope>
</reference>
<reference key="10">
    <citation type="journal article" date="2003" name="Nature">
        <title>Global analysis of protein expression in yeast.</title>
        <authorList>
            <person name="Ghaemmaghami S."/>
            <person name="Huh W.-K."/>
            <person name="Bower K."/>
            <person name="Howson R.W."/>
            <person name="Belle A."/>
            <person name="Dephoure N."/>
            <person name="O'Shea E.K."/>
            <person name="Weissman J.S."/>
        </authorList>
    </citation>
    <scope>LEVEL OF PROTEIN EXPRESSION [LARGE SCALE ANALYSIS]</scope>
</reference>
<reference key="11">
    <citation type="journal article" date="2003" name="Nucleic Acids Res.">
        <title>Characterization of AP lyase activities of Saccharomyces cerevisiae Ntg1p and Ntg2p: implications for biological function.</title>
        <authorList>
            <person name="Meadows K.L."/>
            <person name="Song B."/>
            <person name="Doetsch P.W."/>
        </authorList>
    </citation>
    <scope>FUNCTION</scope>
    <scope>CATALYTIC ACTIVITY</scope>
    <scope>BIOPHYSICOCHEMICAL PROPERTIES</scope>
</reference>
<reference key="12">
    <citation type="journal article" date="2004" name="DNA Repair">
        <title>Involvement of two endonuclease III homologs in the base excision repair pathway for the processing of DNA alkylation damage in Saccharomyces cerevisiae.</title>
        <authorList>
            <person name="Hanna M."/>
            <person name="Chow B.L."/>
            <person name="Morey N.J."/>
            <person name="Jinks-Robertson S."/>
            <person name="Doetsch P.W."/>
            <person name="Xiao W."/>
        </authorList>
    </citation>
    <scope>FUNCTION IN DNA ALKYLATION DAMAGE REPAIR</scope>
</reference>
<reference key="13">
    <citation type="journal article" date="2004" name="Yeast">
        <title>Role of OGG1 and NTG2 in the repair of oxidative DNA damage and mutagenesis induced by hydrogen peroxide in Saccharomyces cerevisiae: relationships with transition metals iron and copper.</title>
        <authorList>
            <person name="Melo R.G."/>
            <person name="Leitao A.C."/>
            <person name="Padula M."/>
        </authorList>
    </citation>
    <scope>FUNCTION</scope>
</reference>
<reference key="14">
    <citation type="journal article" date="2009" name="Biochim. Biophys. Acta">
        <title>Excision of the oxidatively formed 5-hydroxyhydantoin and 5-hydroxy-5-methylhydantoin pyrimidine lesions by Escherichia coli and Saccharomyces cerevisiae DNA N-glycosylases.</title>
        <authorList>
            <person name="Gasparutto D."/>
            <person name="Muller E."/>
            <person name="Boiteux S."/>
            <person name="Cadet J."/>
        </authorList>
    </citation>
    <scope>FUNCTION</scope>
    <scope>SUBSTRATES</scope>
</reference>
<reference key="15">
    <citation type="journal article" date="2009" name="Mol. Cell. Biol.">
        <title>Dynamic compartmentalization of base excision repair proteins in response to nuclear and mitochondrial oxidative stress.</title>
        <authorList>
            <person name="Griffiths L.M."/>
            <person name="Swartzlander D."/>
            <person name="Meadows K.L."/>
            <person name="Wilkinson K.D."/>
            <person name="Corbett A.H."/>
            <person name="Doetsch P.W."/>
        </authorList>
    </citation>
    <scope>SUBCELLULAR LOCATION</scope>
    <scope>SUMOYLATION</scope>
</reference>
<proteinExistence type="evidence at protein level"/>